<organism>
    <name type="scientific">Cereibacter sphaeroides</name>
    <name type="common">Rhodobacter sphaeroides</name>
    <dbReference type="NCBI Taxonomy" id="1063"/>
    <lineage>
        <taxon>Bacteria</taxon>
        <taxon>Pseudomonadati</taxon>
        <taxon>Pseudomonadota</taxon>
        <taxon>Alphaproteobacteria</taxon>
        <taxon>Rhodobacterales</taxon>
        <taxon>Paracoccaceae</taxon>
        <taxon>Cereibacter</taxon>
    </lineage>
</organism>
<sequence length="154" mass="16948">MSMHPALRLLATVLVALGAGPAFTQDAPRLTGADRPMSEVAAPPLPETITDDRRVGRNYPEQPPVIPHAIEGYQLSVNANRCLECHRRQYSGLVAAPMISITHFQDREGQMLADVSPRRYFCTACHVPQTNAQPLVTNEFRDMLTLTPASNEAE</sequence>
<reference evidence="9 11" key="1">
    <citation type="journal article" date="1999" name="Biosci. Biotechnol. Biochem.">
        <title>Involvement in denitrification of the napKEFDABC genes encoding the periplasmic nitrate reductase system in the denitrifying phototrophic bacterium Rhodobacter sphaeroides f. sp. denitrificans.</title>
        <authorList>
            <person name="Liu H.P."/>
            <person name="Takio S."/>
            <person name="Satoh T."/>
            <person name="Yamamoto I."/>
        </authorList>
    </citation>
    <scope>NUCLEOTIDE SEQUENCE [GENOMIC DNA]</scope>
    <scope>FUNCTION</scope>
    <scope>DISRUPTION PHENOTYPE</scope>
    <source>
        <strain evidence="11">f. sp. denitrificans IL106</strain>
    </source>
</reference>
<reference evidence="9 10" key="2">
    <citation type="journal article" date="1999" name="J. Bacteriol.">
        <title>Nitrite and nitrous oxide reductase regulation by nitrogen oxides in Rhodobacter sphaeroides f. sp. denitrificans IL106.</title>
        <authorList>
            <person name="Sabaty M."/>
            <person name="Schwintner C."/>
            <person name="Cahors S."/>
            <person name="Richaud P."/>
            <person name="Vermeglio A."/>
        </authorList>
    </citation>
    <scope>NUCLEOTIDE SEQUENCE [GENOMIC DNA]</scope>
    <scope>FUNCTION</scope>
    <scope>IDENTIFICATION BY MASS SPECTROMETRY</scope>
    <source>
        <strain evidence="10">f. sp. denitrificans IL106</strain>
    </source>
</reference>
<reference evidence="9" key="3">
    <citation type="journal article" date="2001" name="Acta Crystallogr. D">
        <title>Crystallization and preliminary X-ray analysis of the periplasmic nitrate reductase (NapA-NapB complex) from Rhodobacter sphaeroides f. sp. denitrificans.</title>
        <authorList>
            <person name="Pignol D."/>
            <person name="Adriano J.M."/>
            <person name="Fontecilla-Camps J.C."/>
            <person name="Sabaty M."/>
        </authorList>
    </citation>
    <scope>CRYSTALLIZATION</scope>
    <scope>FUNCTION</scope>
    <scope>SUBUNIT</scope>
    <scope>SUBCELLULAR LOCATION</scope>
    <source>
        <strain evidence="7">f. sp. denitrificans IL106</strain>
    </source>
</reference>
<reference evidence="9" key="4">
    <citation type="journal article" date="2005" name="Arch. Microbiol.">
        <title>Differential regulation of periplasmic nitrate reductase gene (napKEFDABC) expression between aerobiosis and anaerobiosis with nitrate in a denitrifying phototroph Rhodobacter sphaeroides f. sp. denitrificans.</title>
        <authorList>
            <person name="Tabata A."/>
            <person name="Yamamoto I."/>
            <person name="Matsuzaki M."/>
            <person name="Satoh T."/>
        </authorList>
    </citation>
    <scope>FUNCTION</scope>
    <scope>INDUCTION</scope>
    <scope>DISRUPTION PHENOTYPE</scope>
    <source>
        <strain evidence="8">f. sp. denitrificans IL106</strain>
    </source>
</reference>
<evidence type="ECO:0000250" key="1">
    <source>
        <dbReference type="UniProtKB" id="P44654"/>
    </source>
</evidence>
<evidence type="ECO:0000250" key="2">
    <source>
        <dbReference type="UniProtKB" id="Q53177"/>
    </source>
</evidence>
<evidence type="ECO:0000255" key="3"/>
<evidence type="ECO:0000256" key="4">
    <source>
        <dbReference type="SAM" id="MobiDB-lite"/>
    </source>
</evidence>
<evidence type="ECO:0000269" key="5">
    <source>
    </source>
</evidence>
<evidence type="ECO:0000269" key="6">
    <source>
    </source>
</evidence>
<evidence type="ECO:0000269" key="7">
    <source>
    </source>
</evidence>
<evidence type="ECO:0000269" key="8">
    <source>
    </source>
</evidence>
<evidence type="ECO:0000305" key="9"/>
<evidence type="ECO:0000312" key="10">
    <source>
        <dbReference type="EMBL" id="AAC23523.1"/>
    </source>
</evidence>
<evidence type="ECO:0000312" key="11">
    <source>
        <dbReference type="EMBL" id="BAA31962.1"/>
    </source>
</evidence>
<protein>
    <recommendedName>
        <fullName>Periplasmic nitrate reductase, electron transfer subunit</fullName>
    </recommendedName>
    <alternativeName>
        <fullName evidence="2">Diheme cytochrome c NapB</fullName>
    </alternativeName>
</protein>
<feature type="signal peptide" evidence="3">
    <location>
        <begin position="1"/>
        <end position="24"/>
    </location>
</feature>
<feature type="chain" id="PRO_5000054350" description="Periplasmic nitrate reductase, electron transfer subunit">
    <location>
        <begin position="25"/>
        <end position="154"/>
    </location>
</feature>
<feature type="region of interest" description="Disordered" evidence="4">
    <location>
        <begin position="27"/>
        <end position="47"/>
    </location>
</feature>
<feature type="binding site" description="axial binding residue" evidence="1">
    <location>
        <position position="68"/>
    </location>
    <ligand>
        <name>heme c</name>
        <dbReference type="ChEBI" id="CHEBI:61717"/>
        <label>1</label>
    </ligand>
    <ligandPart>
        <name>Fe</name>
        <dbReference type="ChEBI" id="CHEBI:18248"/>
    </ligandPart>
</feature>
<feature type="binding site" description="covalent" evidence="1">
    <location>
        <position position="82"/>
    </location>
    <ligand>
        <name>heme c</name>
        <dbReference type="ChEBI" id="CHEBI:61717"/>
        <label>1</label>
    </ligand>
</feature>
<feature type="binding site" description="covalent" evidence="1">
    <location>
        <position position="85"/>
    </location>
    <ligand>
        <name>heme c</name>
        <dbReference type="ChEBI" id="CHEBI:61717"/>
        <label>1</label>
    </ligand>
</feature>
<feature type="binding site" description="axial binding residue" evidence="1">
    <location>
        <position position="86"/>
    </location>
    <ligand>
        <name>heme c</name>
        <dbReference type="ChEBI" id="CHEBI:61717"/>
        <label>1</label>
    </ligand>
    <ligandPart>
        <name>Fe</name>
        <dbReference type="ChEBI" id="CHEBI:18248"/>
    </ligandPart>
</feature>
<feature type="binding site" description="axial binding residue" evidence="1">
    <location>
        <position position="103"/>
    </location>
    <ligand>
        <name>heme c</name>
        <dbReference type="ChEBI" id="CHEBI:61717"/>
        <label>2</label>
    </ligand>
    <ligandPart>
        <name>Fe</name>
        <dbReference type="ChEBI" id="CHEBI:18248"/>
    </ligandPart>
</feature>
<feature type="binding site" description="covalent" evidence="1">
    <location>
        <position position="122"/>
    </location>
    <ligand>
        <name>heme c</name>
        <dbReference type="ChEBI" id="CHEBI:61717"/>
        <label>2</label>
    </ligand>
</feature>
<feature type="binding site" description="covalent" evidence="1">
    <location>
        <position position="125"/>
    </location>
    <ligand>
        <name>heme c</name>
        <dbReference type="ChEBI" id="CHEBI:61717"/>
        <label>2</label>
    </ligand>
</feature>
<feature type="binding site" description="axial binding residue" evidence="1">
    <location>
        <position position="126"/>
    </location>
    <ligand>
        <name>heme c</name>
        <dbReference type="ChEBI" id="CHEBI:61717"/>
        <label>2</label>
    </ligand>
    <ligandPart>
        <name>Fe</name>
        <dbReference type="ChEBI" id="CHEBI:18248"/>
    </ligandPart>
</feature>
<keyword id="KW-0249">Electron transport</keyword>
<keyword id="KW-0349">Heme</keyword>
<keyword id="KW-0408">Iron</keyword>
<keyword id="KW-0479">Metal-binding</keyword>
<keyword id="KW-0574">Periplasm</keyword>
<keyword id="KW-0732">Signal</keyword>
<keyword id="KW-0813">Transport</keyword>
<dbReference type="EMBL" id="AB016290">
    <property type="protein sequence ID" value="BAA31962.1"/>
    <property type="molecule type" value="Genomic_DNA"/>
</dbReference>
<dbReference type="EMBL" id="AF069545">
    <property type="protein sequence ID" value="AAC23523.1"/>
    <property type="molecule type" value="Genomic_DNA"/>
</dbReference>
<dbReference type="RefSeq" id="WP_115475913.1">
    <property type="nucleotide sequence ID" value="NZ_QWGP01000029.1"/>
</dbReference>
<dbReference type="SMR" id="O88160"/>
<dbReference type="GO" id="GO:0042597">
    <property type="term" value="C:periplasmic space"/>
    <property type="evidence" value="ECO:0007669"/>
    <property type="project" value="UniProtKB-SubCell"/>
</dbReference>
<dbReference type="GO" id="GO:0046872">
    <property type="term" value="F:metal ion binding"/>
    <property type="evidence" value="ECO:0007669"/>
    <property type="project" value="UniProtKB-KW"/>
</dbReference>
<dbReference type="GO" id="GO:0009061">
    <property type="term" value="P:anaerobic respiration"/>
    <property type="evidence" value="ECO:0007669"/>
    <property type="project" value="InterPro"/>
</dbReference>
<dbReference type="FunFam" id="1.10.1130.10:FF:000001">
    <property type="entry name" value="Periplasmic nitrate reductase, electron transfer subunit"/>
    <property type="match status" value="1"/>
</dbReference>
<dbReference type="Gene3D" id="1.10.1130.10">
    <property type="entry name" value="Flavocytochrome C3, Chain A"/>
    <property type="match status" value="1"/>
</dbReference>
<dbReference type="InterPro" id="IPR036280">
    <property type="entry name" value="Multihaem_cyt_sf"/>
</dbReference>
<dbReference type="InterPro" id="IPR005591">
    <property type="entry name" value="NapB"/>
</dbReference>
<dbReference type="PANTHER" id="PTHR38604">
    <property type="entry name" value="PERIPLASMIC NITRATE REDUCTASE, ELECTRON TRANSFER SUBUNIT"/>
    <property type="match status" value="1"/>
</dbReference>
<dbReference type="PANTHER" id="PTHR38604:SF1">
    <property type="entry name" value="PERIPLASMIC NITRATE REDUCTASE, ELECTRON TRANSFER SUBUNIT"/>
    <property type="match status" value="1"/>
</dbReference>
<dbReference type="Pfam" id="PF03892">
    <property type="entry name" value="NapB"/>
    <property type="match status" value="1"/>
</dbReference>
<dbReference type="PIRSF" id="PIRSF006105">
    <property type="entry name" value="NapB"/>
    <property type="match status" value="1"/>
</dbReference>
<dbReference type="SUPFAM" id="SSF48695">
    <property type="entry name" value="Multiheme cytochromes"/>
    <property type="match status" value="1"/>
</dbReference>
<dbReference type="PROSITE" id="PS51008">
    <property type="entry name" value="MULTIHEME_CYTC"/>
    <property type="match status" value="1"/>
</dbReference>
<accession>O88160</accession>
<proteinExistence type="evidence at protein level"/>
<comment type="function">
    <text evidence="5 6 7 8">Electron transfer subunit of the periplasmic nitrate reductase complex NapAB. Receives electrons from the membrane-anchored tetraheme c-type NapC protein and transfers these to NapA subunit, thus allowing electron flow between membrane and periplasm. Essential for periplasmic nitrate reduction with nitrate as the terminal electron acceptor.</text>
</comment>
<comment type="subunit">
    <text evidence="7">Component of the periplasmic nitrate reductase NapAB complex composed of NapA and NapB.</text>
</comment>
<comment type="subcellular location">
    <subcellularLocation>
        <location evidence="7">Periplasm</location>
    </subcellularLocation>
</comment>
<comment type="induction">
    <text evidence="8">Induced at high levels by nitrate under anoxic conditions in the dark. Induced by oxic conditions, even in the absence of nitrate. It is suggested that the extent of electron flux to nitrate or oxygen, under anoxic or oxic conditions, respectively, serves as the signal for induction.</text>
</comment>
<comment type="PTM">
    <text evidence="2">Binds 2 heme C groups per subunit.</text>
</comment>
<comment type="disruption phenotype">
    <text evidence="5 8">Decrease in nitrate reductase activity in deletion mutants and failure to grow in dark under anaerobic conditions.</text>
</comment>
<comment type="similarity">
    <text evidence="3">Belongs to the NapB family.</text>
</comment>
<name>NAPB_CERSP</name>
<gene>
    <name evidence="10" type="primary">napB</name>
</gene>